<keyword id="KW-0997">Cell inner membrane</keyword>
<keyword id="KW-1003">Cell membrane</keyword>
<keyword id="KW-0472">Membrane</keyword>
<keyword id="KW-0520">NAD</keyword>
<keyword id="KW-0874">Quinone</keyword>
<keyword id="KW-1185">Reference proteome</keyword>
<keyword id="KW-1278">Translocase</keyword>
<keyword id="KW-0812">Transmembrane</keyword>
<keyword id="KW-1133">Transmembrane helix</keyword>
<keyword id="KW-0830">Ubiquinone</keyword>
<name>NUOH_SULDN</name>
<accession>Q30PI6</accession>
<feature type="chain" id="PRO_0000240116" description="NADH-quinone oxidoreductase subunit H">
    <location>
        <begin position="1"/>
        <end position="328"/>
    </location>
</feature>
<feature type="transmembrane region" description="Helical" evidence="1">
    <location>
        <begin position="10"/>
        <end position="30"/>
    </location>
</feature>
<feature type="transmembrane region" description="Helical" evidence="1">
    <location>
        <begin position="80"/>
        <end position="100"/>
    </location>
</feature>
<feature type="transmembrane region" description="Helical" evidence="1">
    <location>
        <begin position="118"/>
        <end position="138"/>
    </location>
</feature>
<feature type="transmembrane region" description="Helical" evidence="1">
    <location>
        <begin position="155"/>
        <end position="175"/>
    </location>
</feature>
<feature type="transmembrane region" description="Helical" evidence="1">
    <location>
        <begin position="191"/>
        <end position="211"/>
    </location>
</feature>
<feature type="transmembrane region" description="Helical" evidence="1">
    <location>
        <begin position="243"/>
        <end position="263"/>
    </location>
</feature>
<feature type="transmembrane region" description="Helical" evidence="1">
    <location>
        <begin position="272"/>
        <end position="292"/>
    </location>
</feature>
<feature type="transmembrane region" description="Helical" evidence="1">
    <location>
        <begin position="306"/>
        <end position="326"/>
    </location>
</feature>
<comment type="function">
    <text evidence="1">NDH-1 shuttles electrons from NADH, via FMN and iron-sulfur (Fe-S) centers, to quinones in the respiratory chain. The immediate electron acceptor for the enzyme in this species is believed to be ubiquinone. Couples the redox reaction to proton translocation (for every two electrons transferred, four hydrogen ions are translocated across the cytoplasmic membrane), and thus conserves the redox energy in a proton gradient. This subunit may bind ubiquinone.</text>
</comment>
<comment type="catalytic activity">
    <reaction evidence="1">
        <text>a quinone + NADH + 5 H(+)(in) = a quinol + NAD(+) + 4 H(+)(out)</text>
        <dbReference type="Rhea" id="RHEA:57888"/>
        <dbReference type="ChEBI" id="CHEBI:15378"/>
        <dbReference type="ChEBI" id="CHEBI:24646"/>
        <dbReference type="ChEBI" id="CHEBI:57540"/>
        <dbReference type="ChEBI" id="CHEBI:57945"/>
        <dbReference type="ChEBI" id="CHEBI:132124"/>
    </reaction>
</comment>
<comment type="subunit">
    <text evidence="1">NDH-1 is composed of 14 different subunits. Subunits NuoA, H, J, K, L, M, N constitute the membrane sector of the complex.</text>
</comment>
<comment type="subcellular location">
    <subcellularLocation>
        <location evidence="1">Cell inner membrane</location>
        <topology evidence="1">Multi-pass membrane protein</topology>
    </subcellularLocation>
</comment>
<comment type="similarity">
    <text evidence="1">Belongs to the complex I subunit 1 family.</text>
</comment>
<dbReference type="EC" id="7.1.1.-" evidence="1"/>
<dbReference type="EMBL" id="CP000153">
    <property type="protein sequence ID" value="ABB45095.1"/>
    <property type="molecule type" value="Genomic_DNA"/>
</dbReference>
<dbReference type="RefSeq" id="WP_011373435.1">
    <property type="nucleotide sequence ID" value="NC_007575.1"/>
</dbReference>
<dbReference type="SMR" id="Q30PI6"/>
<dbReference type="STRING" id="326298.Suden_1821"/>
<dbReference type="KEGG" id="tdn:Suden_1821"/>
<dbReference type="eggNOG" id="COG1005">
    <property type="taxonomic scope" value="Bacteria"/>
</dbReference>
<dbReference type="HOGENOM" id="CLU_015134_0_1_7"/>
<dbReference type="OrthoDB" id="9803734at2"/>
<dbReference type="Proteomes" id="UP000002714">
    <property type="component" value="Chromosome"/>
</dbReference>
<dbReference type="GO" id="GO:0005886">
    <property type="term" value="C:plasma membrane"/>
    <property type="evidence" value="ECO:0007669"/>
    <property type="project" value="UniProtKB-SubCell"/>
</dbReference>
<dbReference type="GO" id="GO:0003954">
    <property type="term" value="F:NADH dehydrogenase activity"/>
    <property type="evidence" value="ECO:0007669"/>
    <property type="project" value="TreeGrafter"/>
</dbReference>
<dbReference type="GO" id="GO:0016655">
    <property type="term" value="F:oxidoreductase activity, acting on NAD(P)H, quinone or similar compound as acceptor"/>
    <property type="evidence" value="ECO:0007669"/>
    <property type="project" value="UniProtKB-UniRule"/>
</dbReference>
<dbReference type="GO" id="GO:0048038">
    <property type="term" value="F:quinone binding"/>
    <property type="evidence" value="ECO:0007669"/>
    <property type="project" value="UniProtKB-KW"/>
</dbReference>
<dbReference type="GO" id="GO:0009060">
    <property type="term" value="P:aerobic respiration"/>
    <property type="evidence" value="ECO:0007669"/>
    <property type="project" value="TreeGrafter"/>
</dbReference>
<dbReference type="HAMAP" id="MF_01350">
    <property type="entry name" value="NDH1_NuoH"/>
    <property type="match status" value="1"/>
</dbReference>
<dbReference type="InterPro" id="IPR001694">
    <property type="entry name" value="NADH_UbQ_OxRdtase_su1/FPO"/>
</dbReference>
<dbReference type="InterPro" id="IPR018086">
    <property type="entry name" value="NADH_UbQ_OxRdtase_su1_CS"/>
</dbReference>
<dbReference type="NCBIfam" id="NF004741">
    <property type="entry name" value="PRK06076.1-2"/>
    <property type="match status" value="1"/>
</dbReference>
<dbReference type="PANTHER" id="PTHR11432">
    <property type="entry name" value="NADH DEHYDROGENASE SUBUNIT 1"/>
    <property type="match status" value="1"/>
</dbReference>
<dbReference type="PANTHER" id="PTHR11432:SF3">
    <property type="entry name" value="NADH-UBIQUINONE OXIDOREDUCTASE CHAIN 1"/>
    <property type="match status" value="1"/>
</dbReference>
<dbReference type="Pfam" id="PF00146">
    <property type="entry name" value="NADHdh"/>
    <property type="match status" value="1"/>
</dbReference>
<dbReference type="PROSITE" id="PS00667">
    <property type="entry name" value="COMPLEX1_ND1_1"/>
    <property type="match status" value="1"/>
</dbReference>
<sequence>MEASYFIETIIKIVVIVLIFSALAGIGTYFERKVLAFMQRRLGPVNVGPFGLLQVAADGIKLFTKEDIVPTNVVGRIFKIAPVITAATAFMAAAAIPFLPSFTIFGYEVHPIVSDINIGILYILGIMGVGLYGPLLGGMASANKFSLISAARGAAVFISYEVVTGLSILAPIMMVGSLSLIDFNEYQSAGITSWIVWTQPVAFILFWIAAFAETGRTPFHLIANDHEIIDGFGTEYSGMRWGLFFIGEYANMFFISFVISLLFLGGYGDGSLLGALGLLAKVAFFFFFFLWTRAAWPDIRPDQLMWLCWKVLMPIALINIVITAIVMM</sequence>
<proteinExistence type="inferred from homology"/>
<evidence type="ECO:0000255" key="1">
    <source>
        <dbReference type="HAMAP-Rule" id="MF_01350"/>
    </source>
</evidence>
<gene>
    <name evidence="1" type="primary">nuoH</name>
    <name type="ordered locus">Suden_1821</name>
</gene>
<reference key="1">
    <citation type="journal article" date="2008" name="Appl. Environ. Microbiol.">
        <title>Genome of the epsilonproteobacterial chemolithoautotroph Sulfurimonas denitrificans.</title>
        <authorList>
            <person name="Sievert S.M."/>
            <person name="Scott K.M."/>
            <person name="Klotz M.G."/>
            <person name="Chain P.S.G."/>
            <person name="Hauser L.J."/>
            <person name="Hemp J."/>
            <person name="Huegler M."/>
            <person name="Land M."/>
            <person name="Lapidus A."/>
            <person name="Larimer F.W."/>
            <person name="Lucas S."/>
            <person name="Malfatti S.A."/>
            <person name="Meyer F."/>
            <person name="Paulsen I.T."/>
            <person name="Ren Q."/>
            <person name="Simon J."/>
            <person name="Bailey K."/>
            <person name="Diaz E."/>
            <person name="Fitzpatrick K.A."/>
            <person name="Glover B."/>
            <person name="Gwatney N."/>
            <person name="Korajkic A."/>
            <person name="Long A."/>
            <person name="Mobberley J.M."/>
            <person name="Pantry S.N."/>
            <person name="Pazder G."/>
            <person name="Peterson S."/>
            <person name="Quintanilla J.D."/>
            <person name="Sprinkle R."/>
            <person name="Stephens J."/>
            <person name="Thomas P."/>
            <person name="Vaughn R."/>
            <person name="Weber M.J."/>
            <person name="Wooten L.L."/>
        </authorList>
    </citation>
    <scope>NUCLEOTIDE SEQUENCE [LARGE SCALE GENOMIC DNA]</scope>
    <source>
        <strain>ATCC 33889 / DSM 1251</strain>
    </source>
</reference>
<organism>
    <name type="scientific">Sulfurimonas denitrificans (strain ATCC 33889 / DSM 1251)</name>
    <name type="common">Thiomicrospira denitrificans (strain ATCC 33889 / DSM 1251)</name>
    <dbReference type="NCBI Taxonomy" id="326298"/>
    <lineage>
        <taxon>Bacteria</taxon>
        <taxon>Pseudomonadati</taxon>
        <taxon>Campylobacterota</taxon>
        <taxon>Epsilonproteobacteria</taxon>
        <taxon>Campylobacterales</taxon>
        <taxon>Sulfurimonadaceae</taxon>
        <taxon>Sulfurimonas</taxon>
    </lineage>
</organism>
<protein>
    <recommendedName>
        <fullName evidence="1">NADH-quinone oxidoreductase subunit H</fullName>
        <ecNumber evidence="1">7.1.1.-</ecNumber>
    </recommendedName>
    <alternativeName>
        <fullName evidence="1">NADH dehydrogenase I subunit H</fullName>
    </alternativeName>
    <alternativeName>
        <fullName evidence="1">NDH-1 subunit H</fullName>
    </alternativeName>
</protein>